<gene>
    <name evidence="1" type="primary">tdk</name>
    <name type="ordered locus">LL0593</name>
    <name type="ORF">L184871</name>
</gene>
<reference key="1">
    <citation type="journal article" date="2001" name="Genome Res.">
        <title>The complete genome sequence of the lactic acid bacterium Lactococcus lactis ssp. lactis IL1403.</title>
        <authorList>
            <person name="Bolotin A."/>
            <person name="Wincker P."/>
            <person name="Mauger S."/>
            <person name="Jaillon O."/>
            <person name="Malarme K."/>
            <person name="Weissenbach J."/>
            <person name="Ehrlich S.D."/>
            <person name="Sorokin A."/>
        </authorList>
    </citation>
    <scope>NUCLEOTIDE SEQUENCE [LARGE SCALE GENOMIC DNA]</scope>
    <source>
        <strain>IL1403</strain>
    </source>
</reference>
<protein>
    <recommendedName>
        <fullName evidence="1">Thymidine kinase</fullName>
        <ecNumber evidence="1">2.7.1.21</ecNumber>
    </recommendedName>
</protein>
<keyword id="KW-0067">ATP-binding</keyword>
<keyword id="KW-0963">Cytoplasm</keyword>
<keyword id="KW-0237">DNA synthesis</keyword>
<keyword id="KW-0418">Kinase</keyword>
<keyword id="KW-0479">Metal-binding</keyword>
<keyword id="KW-0547">Nucleotide-binding</keyword>
<keyword id="KW-1185">Reference proteome</keyword>
<keyword id="KW-0808">Transferase</keyword>
<keyword id="KW-0862">Zinc</keyword>
<comment type="catalytic activity">
    <reaction evidence="1">
        <text>thymidine + ATP = dTMP + ADP + H(+)</text>
        <dbReference type="Rhea" id="RHEA:19129"/>
        <dbReference type="ChEBI" id="CHEBI:15378"/>
        <dbReference type="ChEBI" id="CHEBI:17748"/>
        <dbReference type="ChEBI" id="CHEBI:30616"/>
        <dbReference type="ChEBI" id="CHEBI:63528"/>
        <dbReference type="ChEBI" id="CHEBI:456216"/>
        <dbReference type="EC" id="2.7.1.21"/>
    </reaction>
</comment>
<comment type="subunit">
    <text evidence="1">Homotetramer.</text>
</comment>
<comment type="subcellular location">
    <subcellularLocation>
        <location evidence="1">Cytoplasm</location>
    </subcellularLocation>
</comment>
<comment type="similarity">
    <text evidence="1">Belongs to the thymidine kinase family.</text>
</comment>
<name>KITH_LACLA</name>
<feature type="chain" id="PRO_0000174983" description="Thymidine kinase">
    <location>
        <begin position="1"/>
        <end position="189"/>
    </location>
</feature>
<feature type="active site" description="Proton acceptor" evidence="1">
    <location>
        <position position="86"/>
    </location>
</feature>
<feature type="binding site" evidence="1">
    <location>
        <begin position="9"/>
        <end position="16"/>
    </location>
    <ligand>
        <name>ATP</name>
        <dbReference type="ChEBI" id="CHEBI:30616"/>
    </ligand>
</feature>
<feature type="binding site" evidence="1">
    <location>
        <begin position="85"/>
        <end position="88"/>
    </location>
    <ligand>
        <name>ATP</name>
        <dbReference type="ChEBI" id="CHEBI:30616"/>
    </ligand>
</feature>
<feature type="binding site" evidence="1">
    <location>
        <position position="143"/>
    </location>
    <ligand>
        <name>Zn(2+)</name>
        <dbReference type="ChEBI" id="CHEBI:29105"/>
    </ligand>
</feature>
<feature type="binding site" evidence="1">
    <location>
        <position position="146"/>
    </location>
    <ligand>
        <name>Zn(2+)</name>
        <dbReference type="ChEBI" id="CHEBI:29105"/>
    </ligand>
</feature>
<feature type="binding site" evidence="1">
    <location>
        <position position="180"/>
    </location>
    <ligand>
        <name>Zn(2+)</name>
        <dbReference type="ChEBI" id="CHEBI:29105"/>
    </ligand>
</feature>
<feature type="binding site" evidence="1">
    <location>
        <position position="183"/>
    </location>
    <ligand>
        <name>Zn(2+)</name>
        <dbReference type="ChEBI" id="CHEBI:29105"/>
    </ligand>
</feature>
<organism>
    <name type="scientific">Lactococcus lactis subsp. lactis (strain IL1403)</name>
    <name type="common">Streptococcus lactis</name>
    <dbReference type="NCBI Taxonomy" id="272623"/>
    <lineage>
        <taxon>Bacteria</taxon>
        <taxon>Bacillati</taxon>
        <taxon>Bacillota</taxon>
        <taxon>Bacilli</taxon>
        <taxon>Lactobacillales</taxon>
        <taxon>Streptococcaceae</taxon>
        <taxon>Lactococcus</taxon>
    </lineage>
</organism>
<accession>Q9CHX5</accession>
<sequence length="189" mass="21423">MAQLYFKYGTMNSGKSIEILKVAHNYEEQGKPVLLMTSSLDTRAGVGTVASRIGMKAEAVAIDEEMSVFDYVNSLPAKPFCVLIDEAQFLNKKHVYDFARVVDELNVPVMAFGLKNDFRNELFEGSKYLLLLADKIEEIKTICWYCSKKATMVIRTIDGKPVYEGEQLQIGGNETYIPVCRKHYFKPEI</sequence>
<dbReference type="EC" id="2.7.1.21" evidence="1"/>
<dbReference type="EMBL" id="AE005176">
    <property type="protein sequence ID" value="AAK04691.1"/>
    <property type="molecule type" value="Genomic_DNA"/>
</dbReference>
<dbReference type="PIR" id="A86699">
    <property type="entry name" value="A86699"/>
</dbReference>
<dbReference type="RefSeq" id="NP_266749.1">
    <property type="nucleotide sequence ID" value="NC_002662.1"/>
</dbReference>
<dbReference type="RefSeq" id="WP_003129492.1">
    <property type="nucleotide sequence ID" value="NC_002662.1"/>
</dbReference>
<dbReference type="SMR" id="Q9CHX5"/>
<dbReference type="PaxDb" id="272623-L184871"/>
<dbReference type="EnsemblBacteria" id="AAK04691">
    <property type="protein sequence ID" value="AAK04691"/>
    <property type="gene ID" value="L184871"/>
</dbReference>
<dbReference type="KEGG" id="lla:L184871"/>
<dbReference type="PATRIC" id="fig|272623.7.peg.633"/>
<dbReference type="eggNOG" id="COG1435">
    <property type="taxonomic scope" value="Bacteria"/>
</dbReference>
<dbReference type="HOGENOM" id="CLU_064400_2_2_9"/>
<dbReference type="OrthoDB" id="9781579at2"/>
<dbReference type="Proteomes" id="UP000002196">
    <property type="component" value="Chromosome"/>
</dbReference>
<dbReference type="GO" id="GO:0005829">
    <property type="term" value="C:cytosol"/>
    <property type="evidence" value="ECO:0007669"/>
    <property type="project" value="TreeGrafter"/>
</dbReference>
<dbReference type="GO" id="GO:0005524">
    <property type="term" value="F:ATP binding"/>
    <property type="evidence" value="ECO:0007669"/>
    <property type="project" value="UniProtKB-UniRule"/>
</dbReference>
<dbReference type="GO" id="GO:0004797">
    <property type="term" value="F:thymidine kinase activity"/>
    <property type="evidence" value="ECO:0007669"/>
    <property type="project" value="UniProtKB-UniRule"/>
</dbReference>
<dbReference type="GO" id="GO:0008270">
    <property type="term" value="F:zinc ion binding"/>
    <property type="evidence" value="ECO:0007669"/>
    <property type="project" value="UniProtKB-UniRule"/>
</dbReference>
<dbReference type="GO" id="GO:0071897">
    <property type="term" value="P:DNA biosynthetic process"/>
    <property type="evidence" value="ECO:0007669"/>
    <property type="project" value="UniProtKB-KW"/>
</dbReference>
<dbReference type="GO" id="GO:0046104">
    <property type="term" value="P:thymidine metabolic process"/>
    <property type="evidence" value="ECO:0007669"/>
    <property type="project" value="TreeGrafter"/>
</dbReference>
<dbReference type="Gene3D" id="3.30.60.20">
    <property type="match status" value="1"/>
</dbReference>
<dbReference type="Gene3D" id="3.40.50.300">
    <property type="entry name" value="P-loop containing nucleotide triphosphate hydrolases"/>
    <property type="match status" value="1"/>
</dbReference>
<dbReference type="HAMAP" id="MF_00124">
    <property type="entry name" value="Thymidine_kinase"/>
    <property type="match status" value="1"/>
</dbReference>
<dbReference type="InterPro" id="IPR027417">
    <property type="entry name" value="P-loop_NTPase"/>
</dbReference>
<dbReference type="InterPro" id="IPR001267">
    <property type="entry name" value="Thymidine_kinase"/>
</dbReference>
<dbReference type="InterPro" id="IPR020633">
    <property type="entry name" value="Thymidine_kinase_CS"/>
</dbReference>
<dbReference type="NCBIfam" id="NF003299">
    <property type="entry name" value="PRK04296.1-4"/>
    <property type="match status" value="1"/>
</dbReference>
<dbReference type="NCBIfam" id="NF003300">
    <property type="entry name" value="PRK04296.1-5"/>
    <property type="match status" value="1"/>
</dbReference>
<dbReference type="PANTHER" id="PTHR11441">
    <property type="entry name" value="THYMIDINE KINASE"/>
    <property type="match status" value="1"/>
</dbReference>
<dbReference type="PANTHER" id="PTHR11441:SF0">
    <property type="entry name" value="THYMIDINE KINASE, CYTOSOLIC"/>
    <property type="match status" value="1"/>
</dbReference>
<dbReference type="Pfam" id="PF00265">
    <property type="entry name" value="TK"/>
    <property type="match status" value="1"/>
</dbReference>
<dbReference type="PIRSF" id="PIRSF035805">
    <property type="entry name" value="TK_cell"/>
    <property type="match status" value="1"/>
</dbReference>
<dbReference type="SUPFAM" id="SSF57716">
    <property type="entry name" value="Glucocorticoid receptor-like (DNA-binding domain)"/>
    <property type="match status" value="1"/>
</dbReference>
<dbReference type="SUPFAM" id="SSF52540">
    <property type="entry name" value="P-loop containing nucleoside triphosphate hydrolases"/>
    <property type="match status" value="1"/>
</dbReference>
<dbReference type="PROSITE" id="PS00603">
    <property type="entry name" value="TK_CELLULAR_TYPE"/>
    <property type="match status" value="1"/>
</dbReference>
<proteinExistence type="inferred from homology"/>
<evidence type="ECO:0000255" key="1">
    <source>
        <dbReference type="HAMAP-Rule" id="MF_00124"/>
    </source>
</evidence>